<name>Y1387_STAAB</name>
<sequence length="145" mass="16221">MDMNFDLYMNGVVEQARNEIESAGYEQLTTAEDVDKVLKQDGTTLVMINSVCGCAGGIARPAASHALHYDVLPDRLVTVFAGQDKEATQRAREYFEGYAPSSPSFALVKDGKITEMIERHQIEGHDVMNVINQLQTLFNKYCEER</sequence>
<gene>
    <name type="ordered locus">SAB1387c</name>
</gene>
<proteinExistence type="inferred from homology"/>
<reference key="1">
    <citation type="journal article" date="2007" name="PLoS ONE">
        <title>Molecular correlates of host specialization in Staphylococcus aureus.</title>
        <authorList>
            <person name="Herron-Olson L."/>
            <person name="Fitzgerald J.R."/>
            <person name="Musser J.M."/>
            <person name="Kapur V."/>
        </authorList>
    </citation>
    <scope>NUCLEOTIDE SEQUENCE [LARGE SCALE GENOMIC DNA]</scope>
    <source>
        <strain>bovine RF122 / ET3-1</strain>
    </source>
</reference>
<dbReference type="EMBL" id="AJ938182">
    <property type="protein sequence ID" value="CAI81076.1"/>
    <property type="molecule type" value="Genomic_DNA"/>
</dbReference>
<dbReference type="SMR" id="Q2YYC7"/>
<dbReference type="KEGG" id="sab:SAB1387c"/>
<dbReference type="HOGENOM" id="CLU_132521_0_0_9"/>
<dbReference type="GO" id="GO:0045454">
    <property type="term" value="P:cell redox homeostasis"/>
    <property type="evidence" value="ECO:0000250"/>
    <property type="project" value="UniProtKB"/>
</dbReference>
<dbReference type="Gene3D" id="3.40.30.10">
    <property type="entry name" value="Glutaredoxin"/>
    <property type="match status" value="1"/>
</dbReference>
<dbReference type="InterPro" id="IPR009474">
    <property type="entry name" value="BrxB/BrxA"/>
</dbReference>
<dbReference type="NCBIfam" id="TIGR04191">
    <property type="entry name" value="YphP_YqiW"/>
    <property type="match status" value="1"/>
</dbReference>
<dbReference type="PANTHER" id="PTHR40052:SF1">
    <property type="entry name" value="BACILLIREDOXIN BRXB"/>
    <property type="match status" value="1"/>
</dbReference>
<dbReference type="PANTHER" id="PTHR40052">
    <property type="entry name" value="UPF0403 PROTEIN YQIW-RELATED"/>
    <property type="match status" value="1"/>
</dbReference>
<dbReference type="Pfam" id="PF06491">
    <property type="entry name" value="Disulph_isomer"/>
    <property type="match status" value="1"/>
</dbReference>
<evidence type="ECO:0000305" key="1"/>
<accession>Q2YYC7</accession>
<feature type="chain" id="PRO_0000271996" description="Bacilliredoxin SAB1387c">
    <location>
        <begin position="1"/>
        <end position="145"/>
    </location>
</feature>
<organism>
    <name type="scientific">Staphylococcus aureus (strain bovine RF122 / ET3-1)</name>
    <dbReference type="NCBI Taxonomy" id="273036"/>
    <lineage>
        <taxon>Bacteria</taxon>
        <taxon>Bacillati</taxon>
        <taxon>Bacillota</taxon>
        <taxon>Bacilli</taxon>
        <taxon>Bacillales</taxon>
        <taxon>Staphylococcaceae</taxon>
        <taxon>Staphylococcus</taxon>
    </lineage>
</organism>
<protein>
    <recommendedName>
        <fullName evidence="1">Bacilliredoxin SAB1387c</fullName>
    </recommendedName>
</protein>
<comment type="similarity">
    <text evidence="1">Belongs to the bacilliredoxin family.</text>
</comment>